<protein>
    <recommendedName>
        <fullName evidence="1">Trigger factor</fullName>
        <shortName evidence="1">TF</shortName>
        <ecNumber evidence="1">5.2.1.8</ecNumber>
    </recommendedName>
    <alternativeName>
        <fullName evidence="1">PPIase</fullName>
    </alternativeName>
</protein>
<dbReference type="EC" id="5.2.1.8" evidence="1"/>
<dbReference type="EMBL" id="CR936503">
    <property type="protein sequence ID" value="CAI55363.1"/>
    <property type="molecule type" value="Genomic_DNA"/>
</dbReference>
<dbReference type="RefSeq" id="WP_011374762.1">
    <property type="nucleotide sequence ID" value="NC_007576.1"/>
</dbReference>
<dbReference type="SMR" id="Q38WR8"/>
<dbReference type="STRING" id="314315.LCA_1062"/>
<dbReference type="GeneID" id="57133918"/>
<dbReference type="KEGG" id="lsa:LCA_1062"/>
<dbReference type="eggNOG" id="COG0544">
    <property type="taxonomic scope" value="Bacteria"/>
</dbReference>
<dbReference type="HOGENOM" id="CLU_033058_3_2_9"/>
<dbReference type="OrthoDB" id="9767721at2"/>
<dbReference type="Proteomes" id="UP000002707">
    <property type="component" value="Chromosome"/>
</dbReference>
<dbReference type="GO" id="GO:0005737">
    <property type="term" value="C:cytoplasm"/>
    <property type="evidence" value="ECO:0007669"/>
    <property type="project" value="UniProtKB-SubCell"/>
</dbReference>
<dbReference type="GO" id="GO:0003755">
    <property type="term" value="F:peptidyl-prolyl cis-trans isomerase activity"/>
    <property type="evidence" value="ECO:0007669"/>
    <property type="project" value="UniProtKB-UniRule"/>
</dbReference>
<dbReference type="GO" id="GO:0044183">
    <property type="term" value="F:protein folding chaperone"/>
    <property type="evidence" value="ECO:0007669"/>
    <property type="project" value="TreeGrafter"/>
</dbReference>
<dbReference type="GO" id="GO:0043022">
    <property type="term" value="F:ribosome binding"/>
    <property type="evidence" value="ECO:0007669"/>
    <property type="project" value="TreeGrafter"/>
</dbReference>
<dbReference type="GO" id="GO:0051083">
    <property type="term" value="P:'de novo' cotranslational protein folding"/>
    <property type="evidence" value="ECO:0007669"/>
    <property type="project" value="TreeGrafter"/>
</dbReference>
<dbReference type="GO" id="GO:0051301">
    <property type="term" value="P:cell division"/>
    <property type="evidence" value="ECO:0007669"/>
    <property type="project" value="UniProtKB-KW"/>
</dbReference>
<dbReference type="GO" id="GO:0061077">
    <property type="term" value="P:chaperone-mediated protein folding"/>
    <property type="evidence" value="ECO:0007669"/>
    <property type="project" value="TreeGrafter"/>
</dbReference>
<dbReference type="GO" id="GO:0015031">
    <property type="term" value="P:protein transport"/>
    <property type="evidence" value="ECO:0007669"/>
    <property type="project" value="UniProtKB-UniRule"/>
</dbReference>
<dbReference type="GO" id="GO:0043335">
    <property type="term" value="P:protein unfolding"/>
    <property type="evidence" value="ECO:0007669"/>
    <property type="project" value="TreeGrafter"/>
</dbReference>
<dbReference type="FunFam" id="3.10.50.40:FF:000001">
    <property type="entry name" value="Trigger factor"/>
    <property type="match status" value="1"/>
</dbReference>
<dbReference type="Gene3D" id="3.10.50.40">
    <property type="match status" value="1"/>
</dbReference>
<dbReference type="Gene3D" id="3.30.70.1050">
    <property type="entry name" value="Trigger factor ribosome-binding domain"/>
    <property type="match status" value="1"/>
</dbReference>
<dbReference type="Gene3D" id="1.10.3120.10">
    <property type="entry name" value="Trigger factor, C-terminal domain"/>
    <property type="match status" value="1"/>
</dbReference>
<dbReference type="HAMAP" id="MF_00303">
    <property type="entry name" value="Trigger_factor_Tig"/>
    <property type="match status" value="1"/>
</dbReference>
<dbReference type="InterPro" id="IPR046357">
    <property type="entry name" value="PPIase_dom_sf"/>
</dbReference>
<dbReference type="InterPro" id="IPR001179">
    <property type="entry name" value="PPIase_FKBP_dom"/>
</dbReference>
<dbReference type="InterPro" id="IPR005215">
    <property type="entry name" value="Trig_fac"/>
</dbReference>
<dbReference type="InterPro" id="IPR008880">
    <property type="entry name" value="Trigger_fac_C"/>
</dbReference>
<dbReference type="InterPro" id="IPR037041">
    <property type="entry name" value="Trigger_fac_C_sf"/>
</dbReference>
<dbReference type="InterPro" id="IPR008881">
    <property type="entry name" value="Trigger_fac_ribosome-bd_bac"/>
</dbReference>
<dbReference type="InterPro" id="IPR036611">
    <property type="entry name" value="Trigger_fac_ribosome-bd_sf"/>
</dbReference>
<dbReference type="InterPro" id="IPR027304">
    <property type="entry name" value="Trigger_fact/SurA_dom_sf"/>
</dbReference>
<dbReference type="NCBIfam" id="TIGR00115">
    <property type="entry name" value="tig"/>
    <property type="match status" value="1"/>
</dbReference>
<dbReference type="PANTHER" id="PTHR30560">
    <property type="entry name" value="TRIGGER FACTOR CHAPERONE AND PEPTIDYL-PROLYL CIS/TRANS ISOMERASE"/>
    <property type="match status" value="1"/>
</dbReference>
<dbReference type="PANTHER" id="PTHR30560:SF3">
    <property type="entry name" value="TRIGGER FACTOR-LIKE PROTEIN TIG, CHLOROPLASTIC"/>
    <property type="match status" value="1"/>
</dbReference>
<dbReference type="Pfam" id="PF00254">
    <property type="entry name" value="FKBP_C"/>
    <property type="match status" value="1"/>
</dbReference>
<dbReference type="Pfam" id="PF05698">
    <property type="entry name" value="Trigger_C"/>
    <property type="match status" value="1"/>
</dbReference>
<dbReference type="Pfam" id="PF05697">
    <property type="entry name" value="Trigger_N"/>
    <property type="match status" value="1"/>
</dbReference>
<dbReference type="PIRSF" id="PIRSF003095">
    <property type="entry name" value="Trigger_factor"/>
    <property type="match status" value="1"/>
</dbReference>
<dbReference type="SUPFAM" id="SSF54534">
    <property type="entry name" value="FKBP-like"/>
    <property type="match status" value="1"/>
</dbReference>
<dbReference type="SUPFAM" id="SSF109998">
    <property type="entry name" value="Triger factor/SurA peptide-binding domain-like"/>
    <property type="match status" value="1"/>
</dbReference>
<dbReference type="SUPFAM" id="SSF102735">
    <property type="entry name" value="Trigger factor ribosome-binding domain"/>
    <property type="match status" value="1"/>
</dbReference>
<dbReference type="PROSITE" id="PS50059">
    <property type="entry name" value="FKBP_PPIASE"/>
    <property type="match status" value="1"/>
</dbReference>
<accession>Q38WR8</accession>
<sequence>MSAKWEKKGANDGELTFEIDLDKISEGLDVAFKRVRKNINTPGFRKGKMPRQIFNKMYGEEALYEDALNAVLPEAYEAAVAEAGIDPVDQPQINVEKMEKGEAWVLTAQVTVKPEVKLGDYKGLEVPKQSRRITIKDVEQELETRRERQAELVLKEDAAAENGDTVVIDYAGSVDGVPFDGGQADNYSLELGSNSFIPGFEDQLVGHKAEEDVDVTVTFPKDYQAEELAGKEAIFKVKIHEVKGKELPELDDEFAKDIDEDVDSLDELKEKIREELKQQKNDAADAAIQDTAVAKATENATIPELPQAMIDEEINSQLQQYLGNMQQQGINPEMYYQITGTTEDDLKKQFAGDADKRVKTSLVLEAVVEAEKIEATDEEVAAELKSLAEQYNMEESAVRSVLSDDMLKHDIGVKKAIEVIADSAVEVKDAK</sequence>
<organism>
    <name type="scientific">Latilactobacillus sakei subsp. sakei (strain 23K)</name>
    <name type="common">Lactobacillus sakei subsp. sakei</name>
    <dbReference type="NCBI Taxonomy" id="314315"/>
    <lineage>
        <taxon>Bacteria</taxon>
        <taxon>Bacillati</taxon>
        <taxon>Bacillota</taxon>
        <taxon>Bacilli</taxon>
        <taxon>Lactobacillales</taxon>
        <taxon>Lactobacillaceae</taxon>
        <taxon>Latilactobacillus</taxon>
    </lineage>
</organism>
<evidence type="ECO:0000255" key="1">
    <source>
        <dbReference type="HAMAP-Rule" id="MF_00303"/>
    </source>
</evidence>
<gene>
    <name evidence="1" type="primary">tig</name>
    <name type="ordered locus">LCA_1062</name>
</gene>
<feature type="chain" id="PRO_0000256568" description="Trigger factor">
    <location>
        <begin position="1"/>
        <end position="431"/>
    </location>
</feature>
<feature type="domain" description="PPIase FKBP-type" evidence="1">
    <location>
        <begin position="163"/>
        <end position="248"/>
    </location>
</feature>
<name>TIG_LATSS</name>
<keyword id="KW-0131">Cell cycle</keyword>
<keyword id="KW-0132">Cell division</keyword>
<keyword id="KW-0143">Chaperone</keyword>
<keyword id="KW-0963">Cytoplasm</keyword>
<keyword id="KW-0413">Isomerase</keyword>
<keyword id="KW-1185">Reference proteome</keyword>
<keyword id="KW-0697">Rotamase</keyword>
<reference key="1">
    <citation type="journal article" date="2005" name="Nat. Biotechnol.">
        <title>The complete genome sequence of the meat-borne lactic acid bacterium Lactobacillus sakei 23K.</title>
        <authorList>
            <person name="Chaillou S."/>
            <person name="Champomier-Verges M.-C."/>
            <person name="Cornet M."/>
            <person name="Crutz-Le Coq A.-M."/>
            <person name="Dudez A.-M."/>
            <person name="Martin V."/>
            <person name="Beaufils S."/>
            <person name="Darbon-Rongere E."/>
            <person name="Bossy R."/>
            <person name="Loux V."/>
            <person name="Zagorec M."/>
        </authorList>
    </citation>
    <scope>NUCLEOTIDE SEQUENCE [LARGE SCALE GENOMIC DNA]</scope>
    <source>
        <strain>23K</strain>
    </source>
</reference>
<comment type="function">
    <text evidence="1">Involved in protein export. Acts as a chaperone by maintaining the newly synthesized protein in an open conformation. Functions as a peptidyl-prolyl cis-trans isomerase.</text>
</comment>
<comment type="catalytic activity">
    <reaction evidence="1">
        <text>[protein]-peptidylproline (omega=180) = [protein]-peptidylproline (omega=0)</text>
        <dbReference type="Rhea" id="RHEA:16237"/>
        <dbReference type="Rhea" id="RHEA-COMP:10747"/>
        <dbReference type="Rhea" id="RHEA-COMP:10748"/>
        <dbReference type="ChEBI" id="CHEBI:83833"/>
        <dbReference type="ChEBI" id="CHEBI:83834"/>
        <dbReference type="EC" id="5.2.1.8"/>
    </reaction>
</comment>
<comment type="subcellular location">
    <subcellularLocation>
        <location>Cytoplasm</location>
    </subcellularLocation>
    <text evidence="1">About half TF is bound to the ribosome near the polypeptide exit tunnel while the other half is free in the cytoplasm.</text>
</comment>
<comment type="domain">
    <text evidence="1">Consists of 3 domains; the N-terminus binds the ribosome, the middle domain has PPIase activity, while the C-terminus has intrinsic chaperone activity on its own.</text>
</comment>
<comment type="similarity">
    <text evidence="1">Belongs to the FKBP-type PPIase family. Tig subfamily.</text>
</comment>
<proteinExistence type="inferred from homology"/>